<proteinExistence type="inferred from homology"/>
<comment type="function">
    <text evidence="1">Murein-degrading enzyme. May play a role in recycling of muropeptides during cell elongation and/or cell division.</text>
</comment>
<comment type="catalytic activity">
    <reaction evidence="1">
        <text>Exolytic cleavage of the (1-&gt;4)-beta-glycosidic linkage between N-acetylmuramic acid (MurNAc) and N-acetylglucosamine (GlcNAc) residues in peptidoglycan, from either the reducing or the non-reducing ends of the peptidoglycan chains, with concomitant formation of a 1,6-anhydrobond in the MurNAc residue.</text>
        <dbReference type="EC" id="4.2.2.n1"/>
    </reaction>
</comment>
<comment type="subcellular location">
    <subcellularLocation>
        <location evidence="1">Cell outer membrane</location>
        <topology evidence="1">Lipid-anchor</topology>
    </subcellularLocation>
</comment>
<comment type="similarity">
    <text evidence="1">Belongs to the transglycosylase Slt family.</text>
</comment>
<gene>
    <name evidence="1" type="primary">mltC</name>
    <name type="ordered locus">SG2037</name>
</gene>
<feature type="signal peptide" evidence="1">
    <location>
        <begin position="1"/>
        <end position="16"/>
    </location>
</feature>
<feature type="chain" id="PRO_1000069480" description="Membrane-bound lytic murein transglycosylase C">
    <location>
        <begin position="17"/>
        <end position="357"/>
    </location>
</feature>
<feature type="lipid moiety-binding region" description="N-palmitoyl cysteine" evidence="1">
    <location>
        <position position="17"/>
    </location>
</feature>
<feature type="lipid moiety-binding region" description="S-diacylglycerol cysteine" evidence="1">
    <location>
        <position position="17"/>
    </location>
</feature>
<protein>
    <recommendedName>
        <fullName evidence="1">Membrane-bound lytic murein transglycosylase C</fullName>
        <ecNumber evidence="1">4.2.2.n1</ecNumber>
    </recommendedName>
    <alternativeName>
        <fullName evidence="1">Murein lyase C</fullName>
    </alternativeName>
</protein>
<dbReference type="EC" id="4.2.2.n1" evidence="1"/>
<dbReference type="EMBL" id="AP008232">
    <property type="protein sequence ID" value="BAE75312.1"/>
    <property type="molecule type" value="Genomic_DNA"/>
</dbReference>
<dbReference type="RefSeq" id="WP_011411767.1">
    <property type="nucleotide sequence ID" value="NC_007712.1"/>
</dbReference>
<dbReference type="SMR" id="Q2NRB3"/>
<dbReference type="STRING" id="343509.SG2037"/>
<dbReference type="CAZy" id="GH23">
    <property type="family name" value="Glycoside Hydrolase Family 23"/>
</dbReference>
<dbReference type="KEGG" id="sgl:SG2037"/>
<dbReference type="eggNOG" id="COG0741">
    <property type="taxonomic scope" value="Bacteria"/>
</dbReference>
<dbReference type="HOGENOM" id="CLU_044583_0_0_6"/>
<dbReference type="OrthoDB" id="5620293at2"/>
<dbReference type="BioCyc" id="SGLO343509:SGP1_RS18595-MONOMER"/>
<dbReference type="Proteomes" id="UP000001932">
    <property type="component" value="Chromosome"/>
</dbReference>
<dbReference type="GO" id="GO:0009279">
    <property type="term" value="C:cell outer membrane"/>
    <property type="evidence" value="ECO:0007669"/>
    <property type="project" value="UniProtKB-SubCell"/>
</dbReference>
<dbReference type="GO" id="GO:0016798">
    <property type="term" value="F:hydrolase activity, acting on glycosyl bonds"/>
    <property type="evidence" value="ECO:0007669"/>
    <property type="project" value="InterPro"/>
</dbReference>
<dbReference type="GO" id="GO:0008933">
    <property type="term" value="F:peptidoglycan lytic transglycosylase activity"/>
    <property type="evidence" value="ECO:0007669"/>
    <property type="project" value="UniProtKB-UniRule"/>
</dbReference>
<dbReference type="GO" id="GO:0016998">
    <property type="term" value="P:cell wall macromolecule catabolic process"/>
    <property type="evidence" value="ECO:0007669"/>
    <property type="project" value="UniProtKB-UniRule"/>
</dbReference>
<dbReference type="GO" id="GO:0071555">
    <property type="term" value="P:cell wall organization"/>
    <property type="evidence" value="ECO:0007669"/>
    <property type="project" value="UniProtKB-KW"/>
</dbReference>
<dbReference type="GO" id="GO:0000270">
    <property type="term" value="P:peptidoglycan metabolic process"/>
    <property type="evidence" value="ECO:0007669"/>
    <property type="project" value="InterPro"/>
</dbReference>
<dbReference type="CDD" id="cd16893">
    <property type="entry name" value="LT_MltC_MltE"/>
    <property type="match status" value="1"/>
</dbReference>
<dbReference type="FunFam" id="1.10.530.10:FF:000002">
    <property type="entry name" value="Membrane-bound lytic murein transglycosylase C"/>
    <property type="match status" value="1"/>
</dbReference>
<dbReference type="Gene3D" id="1.10.530.10">
    <property type="match status" value="1"/>
</dbReference>
<dbReference type="HAMAP" id="MF_01616">
    <property type="entry name" value="MltC"/>
    <property type="match status" value="1"/>
</dbReference>
<dbReference type="InterPro" id="IPR023346">
    <property type="entry name" value="Lysozyme-like_dom_sf"/>
</dbReference>
<dbReference type="InterPro" id="IPR023664">
    <property type="entry name" value="Murein_transglycosylaseC"/>
</dbReference>
<dbReference type="InterPro" id="IPR024570">
    <property type="entry name" value="Murein_transglycosylaseC_N"/>
</dbReference>
<dbReference type="InterPro" id="IPR000189">
    <property type="entry name" value="Transglyc_AS"/>
</dbReference>
<dbReference type="InterPro" id="IPR008258">
    <property type="entry name" value="Transglycosylase_SLT_dom_1"/>
</dbReference>
<dbReference type="NCBIfam" id="NF008670">
    <property type="entry name" value="PRK11671.1"/>
    <property type="match status" value="1"/>
</dbReference>
<dbReference type="PANTHER" id="PTHR37423:SF2">
    <property type="entry name" value="MEMBRANE-BOUND LYTIC MUREIN TRANSGLYCOSYLASE C"/>
    <property type="match status" value="1"/>
</dbReference>
<dbReference type="PANTHER" id="PTHR37423">
    <property type="entry name" value="SOLUBLE LYTIC MUREIN TRANSGLYCOSYLASE-RELATED"/>
    <property type="match status" value="1"/>
</dbReference>
<dbReference type="Pfam" id="PF11873">
    <property type="entry name" value="Mltc_N"/>
    <property type="match status" value="1"/>
</dbReference>
<dbReference type="Pfam" id="PF01464">
    <property type="entry name" value="SLT"/>
    <property type="match status" value="1"/>
</dbReference>
<dbReference type="SUPFAM" id="SSF53955">
    <property type="entry name" value="Lysozyme-like"/>
    <property type="match status" value="1"/>
</dbReference>
<dbReference type="PROSITE" id="PS51257">
    <property type="entry name" value="PROKAR_LIPOPROTEIN"/>
    <property type="match status" value="1"/>
</dbReference>
<dbReference type="PROSITE" id="PS00922">
    <property type="entry name" value="TRANSGLYCOSYLASE"/>
    <property type="match status" value="1"/>
</dbReference>
<organism>
    <name type="scientific">Sodalis glossinidius (strain morsitans)</name>
    <dbReference type="NCBI Taxonomy" id="343509"/>
    <lineage>
        <taxon>Bacteria</taxon>
        <taxon>Pseudomonadati</taxon>
        <taxon>Pseudomonadota</taxon>
        <taxon>Gammaproteobacteria</taxon>
        <taxon>Enterobacterales</taxon>
        <taxon>Bruguierivoracaceae</taxon>
        <taxon>Sodalis</taxon>
    </lineage>
</organism>
<evidence type="ECO:0000255" key="1">
    <source>
        <dbReference type="HAMAP-Rule" id="MF_01616"/>
    </source>
</evidence>
<reference key="1">
    <citation type="journal article" date="2006" name="Genome Res.">
        <title>Massive genome erosion and functional adaptations provide insights into the symbiotic lifestyle of Sodalis glossinidius in the tsetse host.</title>
        <authorList>
            <person name="Toh H."/>
            <person name="Weiss B.L."/>
            <person name="Perkin S.A.H."/>
            <person name="Yamashita A."/>
            <person name="Oshima K."/>
            <person name="Hattori M."/>
            <person name="Aksoy S."/>
        </authorList>
    </citation>
    <scope>NUCLEOTIDE SEQUENCE [LARGE SCALE GENOMIC DNA]</scope>
    <source>
        <strain>morsitans</strain>
    </source>
</reference>
<sequence>MKKILPLVIIAPLLISCSSSKNKAENEAYIKDTNGFDILMGQFAHNIENLWGLNEVLIAGPKDYVKYTDQYETRSHINFDAGTITVETIAGDNPSAHLRQAIISTLLMGNDPGTIDLYSDADYIPISKEPFLYGQVLDNNGEPIRWEWHAAHFADYLLQTRLQTRTTGLRQIWSITIQLVPNHLDKRAHKYLGMVRKASQQYGVDQSLILAIMQTESSFNPYAVSHADALGLMQVVQHSAGRDVFKMKGKWGQPSRSYLFDPENNIDTGTAYLAMLQNSYLGGIVNPTSRRYAVITAYNGGAGSVLRVFSRDQNRAFQIINGMPPDQVYQTLSTQHPSAESRRYLYKVNNLQKNYRR</sequence>
<accession>Q2NRB3</accession>
<keyword id="KW-0998">Cell outer membrane</keyword>
<keyword id="KW-0961">Cell wall biogenesis/degradation</keyword>
<keyword id="KW-0449">Lipoprotein</keyword>
<keyword id="KW-0456">Lyase</keyword>
<keyword id="KW-0472">Membrane</keyword>
<keyword id="KW-0564">Palmitate</keyword>
<keyword id="KW-0732">Signal</keyword>
<name>MLTC_SODGM</name>